<dbReference type="EC" id="3.6.1.7"/>
<dbReference type="EMBL" id="AP009384">
    <property type="protein sequence ID" value="BAF88314.1"/>
    <property type="molecule type" value="Genomic_DNA"/>
</dbReference>
<dbReference type="RefSeq" id="WP_012170843.1">
    <property type="nucleotide sequence ID" value="NC_009937.1"/>
</dbReference>
<dbReference type="SMR" id="A8I5S8"/>
<dbReference type="STRING" id="438753.AZC_2316"/>
<dbReference type="KEGG" id="azc:AZC_2316"/>
<dbReference type="eggNOG" id="COG1254">
    <property type="taxonomic scope" value="Bacteria"/>
</dbReference>
<dbReference type="HOGENOM" id="CLU_141932_3_2_5"/>
<dbReference type="Proteomes" id="UP000000270">
    <property type="component" value="Chromosome"/>
</dbReference>
<dbReference type="GO" id="GO:0003998">
    <property type="term" value="F:acylphosphatase activity"/>
    <property type="evidence" value="ECO:0007669"/>
    <property type="project" value="UniProtKB-EC"/>
</dbReference>
<dbReference type="Gene3D" id="3.30.70.100">
    <property type="match status" value="1"/>
</dbReference>
<dbReference type="InterPro" id="IPR020456">
    <property type="entry name" value="Acylphosphatase"/>
</dbReference>
<dbReference type="InterPro" id="IPR001792">
    <property type="entry name" value="Acylphosphatase-like_dom"/>
</dbReference>
<dbReference type="InterPro" id="IPR036046">
    <property type="entry name" value="Acylphosphatase-like_dom_sf"/>
</dbReference>
<dbReference type="InterPro" id="IPR017968">
    <property type="entry name" value="Acylphosphatase_CS"/>
</dbReference>
<dbReference type="PANTHER" id="PTHR47268">
    <property type="entry name" value="ACYLPHOSPHATASE"/>
    <property type="match status" value="1"/>
</dbReference>
<dbReference type="PANTHER" id="PTHR47268:SF4">
    <property type="entry name" value="ACYLPHOSPHATASE"/>
    <property type="match status" value="1"/>
</dbReference>
<dbReference type="Pfam" id="PF00708">
    <property type="entry name" value="Acylphosphatase"/>
    <property type="match status" value="1"/>
</dbReference>
<dbReference type="PRINTS" id="PR00112">
    <property type="entry name" value="ACYLPHPHTASE"/>
</dbReference>
<dbReference type="SUPFAM" id="SSF54975">
    <property type="entry name" value="Acylphosphatase/BLUF domain-like"/>
    <property type="match status" value="1"/>
</dbReference>
<dbReference type="PROSITE" id="PS00151">
    <property type="entry name" value="ACYLPHOSPHATASE_2"/>
    <property type="match status" value="1"/>
</dbReference>
<dbReference type="PROSITE" id="PS51160">
    <property type="entry name" value="ACYLPHOSPHATASE_3"/>
    <property type="match status" value="1"/>
</dbReference>
<reference key="1">
    <citation type="submission" date="2007-04" db="EMBL/GenBank/DDBJ databases">
        <title>Complete genome sequence of the nitrogen-fixing bacterium Azorhizobium caulinodans ORS571.</title>
        <authorList>
            <person name="Lee K.B."/>
            <person name="Backer P.D."/>
            <person name="Aono T."/>
            <person name="Liu C.T."/>
            <person name="Suzuki S."/>
            <person name="Suzuki T."/>
            <person name="Kaneko T."/>
            <person name="Yamada M."/>
            <person name="Tabata S."/>
            <person name="Kupfer D.M."/>
            <person name="Najar F.Z."/>
            <person name="Wiley G.B."/>
            <person name="Roe B."/>
            <person name="Binnewies T."/>
            <person name="Ussery D."/>
            <person name="Vereecke D."/>
            <person name="Gevers D."/>
            <person name="Holsters M."/>
            <person name="Oyaizu H."/>
        </authorList>
    </citation>
    <scope>NUCLEOTIDE SEQUENCE [LARGE SCALE GENOMIC DNA]</scope>
    <source>
        <strain>ATCC 43989 / DSM 5975 / JCM 20966 / LMG 6465 / NBRC 14845 / NCIMB 13405 / ORS 571</strain>
    </source>
</reference>
<proteinExistence type="inferred from homology"/>
<name>ACYP_AZOC5</name>
<gene>
    <name type="primary">acyP</name>
    <name type="ordered locus">AZC_2316</name>
</gene>
<protein>
    <recommendedName>
        <fullName>Acylphosphatase</fullName>
        <ecNumber>3.6.1.7</ecNumber>
    </recommendedName>
    <alternativeName>
        <fullName>Acylphosphate phosphohydrolase</fullName>
    </alternativeName>
</protein>
<accession>A8I5S8</accession>
<comment type="catalytic activity">
    <reaction>
        <text>an acyl phosphate + H2O = a carboxylate + phosphate + H(+)</text>
        <dbReference type="Rhea" id="RHEA:14965"/>
        <dbReference type="ChEBI" id="CHEBI:15377"/>
        <dbReference type="ChEBI" id="CHEBI:15378"/>
        <dbReference type="ChEBI" id="CHEBI:29067"/>
        <dbReference type="ChEBI" id="CHEBI:43474"/>
        <dbReference type="ChEBI" id="CHEBI:59918"/>
        <dbReference type="EC" id="3.6.1.7"/>
    </reaction>
</comment>
<comment type="similarity">
    <text evidence="2">Belongs to the acylphosphatase family.</text>
</comment>
<keyword id="KW-0378">Hydrolase</keyword>
<keyword id="KW-1185">Reference proteome</keyword>
<evidence type="ECO:0000255" key="1">
    <source>
        <dbReference type="PROSITE-ProRule" id="PRU00520"/>
    </source>
</evidence>
<evidence type="ECO:0000305" key="2"/>
<sequence>MTHTLHLVIHGRVQGVGYRAWCADEAVSRGLSGFVRNRREGTVEAVISGPSEAVAAMLEACRSGPAHAHVERIEEALAEAPPAGTGFRVAATV</sequence>
<feature type="chain" id="PRO_0000326655" description="Acylphosphatase">
    <location>
        <begin position="1"/>
        <end position="93"/>
    </location>
</feature>
<feature type="domain" description="Acylphosphatase-like" evidence="1">
    <location>
        <begin position="4"/>
        <end position="91"/>
    </location>
</feature>
<feature type="active site" evidence="1">
    <location>
        <position position="19"/>
    </location>
</feature>
<feature type="active site" evidence="1">
    <location>
        <position position="37"/>
    </location>
</feature>
<organism>
    <name type="scientific">Azorhizobium caulinodans (strain ATCC 43989 / DSM 5975 / JCM 20966 / LMG 6465 / NBRC 14845 / NCIMB 13405 / ORS 571)</name>
    <dbReference type="NCBI Taxonomy" id="438753"/>
    <lineage>
        <taxon>Bacteria</taxon>
        <taxon>Pseudomonadati</taxon>
        <taxon>Pseudomonadota</taxon>
        <taxon>Alphaproteobacteria</taxon>
        <taxon>Hyphomicrobiales</taxon>
        <taxon>Xanthobacteraceae</taxon>
        <taxon>Azorhizobium</taxon>
    </lineage>
</organism>